<accession>C1ET44</accession>
<feature type="chain" id="PRO_1000166043" description="Large ribosomal subunit protein uL22">
    <location>
        <begin position="1"/>
        <end position="113"/>
    </location>
</feature>
<name>RL22_BACC3</name>
<evidence type="ECO:0000255" key="1">
    <source>
        <dbReference type="HAMAP-Rule" id="MF_01331"/>
    </source>
</evidence>
<evidence type="ECO:0000305" key="2"/>
<reference key="1">
    <citation type="submission" date="2009-02" db="EMBL/GenBank/DDBJ databases">
        <title>Genome sequence of Bacillus cereus 03BB102.</title>
        <authorList>
            <person name="Dodson R.J."/>
            <person name="Jackson P."/>
            <person name="Munk A.C."/>
            <person name="Brettin T."/>
            <person name="Bruce D."/>
            <person name="Detter C."/>
            <person name="Tapia R."/>
            <person name="Han C."/>
            <person name="Sutton G."/>
            <person name="Sims D."/>
        </authorList>
    </citation>
    <scope>NUCLEOTIDE SEQUENCE [LARGE SCALE GENOMIC DNA]</scope>
    <source>
        <strain>03BB102</strain>
    </source>
</reference>
<comment type="function">
    <text evidence="1">This protein binds specifically to 23S rRNA; its binding is stimulated by other ribosomal proteins, e.g. L4, L17, and L20. It is important during the early stages of 50S assembly. It makes multiple contacts with different domains of the 23S rRNA in the assembled 50S subunit and ribosome (By similarity).</text>
</comment>
<comment type="function">
    <text evidence="1">The globular domain of the protein is located near the polypeptide exit tunnel on the outside of the subunit, while an extended beta-hairpin is found that lines the wall of the exit tunnel in the center of the 70S ribosome.</text>
</comment>
<comment type="subunit">
    <text evidence="1">Part of the 50S ribosomal subunit.</text>
</comment>
<comment type="similarity">
    <text evidence="1">Belongs to the universal ribosomal protein uL22 family.</text>
</comment>
<dbReference type="EMBL" id="CP001407">
    <property type="protein sequence ID" value="ACO30102.1"/>
    <property type="molecule type" value="Genomic_DNA"/>
</dbReference>
<dbReference type="RefSeq" id="WP_001148025.1">
    <property type="nucleotide sequence ID" value="NZ_CP009318.1"/>
</dbReference>
<dbReference type="SMR" id="C1ET44"/>
<dbReference type="GeneID" id="93010938"/>
<dbReference type="KEGG" id="bcx:BCA_0144"/>
<dbReference type="PATRIC" id="fig|572264.18.peg.179"/>
<dbReference type="Proteomes" id="UP000002210">
    <property type="component" value="Chromosome"/>
</dbReference>
<dbReference type="GO" id="GO:0022625">
    <property type="term" value="C:cytosolic large ribosomal subunit"/>
    <property type="evidence" value="ECO:0007669"/>
    <property type="project" value="TreeGrafter"/>
</dbReference>
<dbReference type="GO" id="GO:0019843">
    <property type="term" value="F:rRNA binding"/>
    <property type="evidence" value="ECO:0007669"/>
    <property type="project" value="UniProtKB-UniRule"/>
</dbReference>
<dbReference type="GO" id="GO:0003735">
    <property type="term" value="F:structural constituent of ribosome"/>
    <property type="evidence" value="ECO:0007669"/>
    <property type="project" value="InterPro"/>
</dbReference>
<dbReference type="GO" id="GO:0006412">
    <property type="term" value="P:translation"/>
    <property type="evidence" value="ECO:0007669"/>
    <property type="project" value="UniProtKB-UniRule"/>
</dbReference>
<dbReference type="CDD" id="cd00336">
    <property type="entry name" value="Ribosomal_L22"/>
    <property type="match status" value="1"/>
</dbReference>
<dbReference type="FunFam" id="3.90.470.10:FF:000001">
    <property type="entry name" value="50S ribosomal protein L22"/>
    <property type="match status" value="1"/>
</dbReference>
<dbReference type="Gene3D" id="3.90.470.10">
    <property type="entry name" value="Ribosomal protein L22/L17"/>
    <property type="match status" value="1"/>
</dbReference>
<dbReference type="HAMAP" id="MF_01331_B">
    <property type="entry name" value="Ribosomal_uL22_B"/>
    <property type="match status" value="1"/>
</dbReference>
<dbReference type="InterPro" id="IPR001063">
    <property type="entry name" value="Ribosomal_uL22"/>
</dbReference>
<dbReference type="InterPro" id="IPR005727">
    <property type="entry name" value="Ribosomal_uL22_bac/chlpt-type"/>
</dbReference>
<dbReference type="InterPro" id="IPR047867">
    <property type="entry name" value="Ribosomal_uL22_bac/org-type"/>
</dbReference>
<dbReference type="InterPro" id="IPR018260">
    <property type="entry name" value="Ribosomal_uL22_CS"/>
</dbReference>
<dbReference type="InterPro" id="IPR036394">
    <property type="entry name" value="Ribosomal_uL22_sf"/>
</dbReference>
<dbReference type="NCBIfam" id="TIGR01044">
    <property type="entry name" value="rplV_bact"/>
    <property type="match status" value="1"/>
</dbReference>
<dbReference type="PANTHER" id="PTHR13501">
    <property type="entry name" value="CHLOROPLAST 50S RIBOSOMAL PROTEIN L22-RELATED"/>
    <property type="match status" value="1"/>
</dbReference>
<dbReference type="PANTHER" id="PTHR13501:SF8">
    <property type="entry name" value="LARGE RIBOSOMAL SUBUNIT PROTEIN UL22M"/>
    <property type="match status" value="1"/>
</dbReference>
<dbReference type="Pfam" id="PF00237">
    <property type="entry name" value="Ribosomal_L22"/>
    <property type="match status" value="1"/>
</dbReference>
<dbReference type="SUPFAM" id="SSF54843">
    <property type="entry name" value="Ribosomal protein L22"/>
    <property type="match status" value="1"/>
</dbReference>
<dbReference type="PROSITE" id="PS00464">
    <property type="entry name" value="RIBOSOMAL_L22"/>
    <property type="match status" value="1"/>
</dbReference>
<proteinExistence type="inferred from homology"/>
<organism>
    <name type="scientific">Bacillus cereus (strain 03BB102)</name>
    <dbReference type="NCBI Taxonomy" id="572264"/>
    <lineage>
        <taxon>Bacteria</taxon>
        <taxon>Bacillati</taxon>
        <taxon>Bacillota</taxon>
        <taxon>Bacilli</taxon>
        <taxon>Bacillales</taxon>
        <taxon>Bacillaceae</taxon>
        <taxon>Bacillus</taxon>
        <taxon>Bacillus cereus group</taxon>
    </lineage>
</organism>
<gene>
    <name evidence="1" type="primary">rplV</name>
    <name type="ordered locus">BCA_0144</name>
</gene>
<protein>
    <recommendedName>
        <fullName evidence="1">Large ribosomal subunit protein uL22</fullName>
    </recommendedName>
    <alternativeName>
        <fullName evidence="2">50S ribosomal protein L22</fullName>
    </alternativeName>
</protein>
<keyword id="KW-0687">Ribonucleoprotein</keyword>
<keyword id="KW-0689">Ribosomal protein</keyword>
<keyword id="KW-0694">RNA-binding</keyword>
<keyword id="KW-0699">rRNA-binding</keyword>
<sequence>MQAKAVARTVRIAPRKVRLVVDLIRGKQVGEAIAILNHTPKTASPVVEKVLKSAIANAEHNYEMDINSLVVEKVFVDEGPTLKRFRPRAMGRASQINKRTSHITVVVSEKKEG</sequence>